<dbReference type="EC" id="2.7.7.67" evidence="1"/>
<dbReference type="EMBL" id="AE009441">
    <property type="protein sequence ID" value="AAL62929.1"/>
    <property type="molecule type" value="Genomic_DNA"/>
</dbReference>
<dbReference type="RefSeq" id="WP_011007401.1">
    <property type="nucleotide sequence ID" value="NC_003364.1"/>
</dbReference>
<dbReference type="SMR" id="Q8ZYR4"/>
<dbReference type="STRING" id="178306.PAE0660"/>
<dbReference type="EnsemblBacteria" id="AAL62929">
    <property type="protein sequence ID" value="AAL62929"/>
    <property type="gene ID" value="PAE0660"/>
</dbReference>
<dbReference type="GeneID" id="1465154"/>
<dbReference type="KEGG" id="pai:PAE0660"/>
<dbReference type="PATRIC" id="fig|178306.9.peg.474"/>
<dbReference type="eggNOG" id="arCOG04106">
    <property type="taxonomic scope" value="Archaea"/>
</dbReference>
<dbReference type="HOGENOM" id="CLU_105710_0_0_2"/>
<dbReference type="InParanoid" id="Q8ZYR4"/>
<dbReference type="UniPathway" id="UPA00940"/>
<dbReference type="Proteomes" id="UP000002439">
    <property type="component" value="Chromosome"/>
</dbReference>
<dbReference type="GO" id="GO:0005886">
    <property type="term" value="C:plasma membrane"/>
    <property type="evidence" value="ECO:0007669"/>
    <property type="project" value="UniProtKB-SubCell"/>
</dbReference>
<dbReference type="GO" id="GO:0043338">
    <property type="term" value="F:CDP-2,3-bis-(O-geranylgeranyl)-sn-glycerol synthase activity"/>
    <property type="evidence" value="ECO:0007669"/>
    <property type="project" value="UniProtKB-EC"/>
</dbReference>
<dbReference type="GO" id="GO:0046474">
    <property type="term" value="P:glycerophospholipid biosynthetic process"/>
    <property type="evidence" value="ECO:0007669"/>
    <property type="project" value="UniProtKB-UniRule"/>
</dbReference>
<dbReference type="HAMAP" id="MF_01117">
    <property type="entry name" value="CDP_archaeol_synth"/>
    <property type="match status" value="1"/>
</dbReference>
<dbReference type="InterPro" id="IPR032690">
    <property type="entry name" value="CarS"/>
</dbReference>
<dbReference type="InterPro" id="IPR002726">
    <property type="entry name" value="CarS_archaea"/>
</dbReference>
<dbReference type="NCBIfam" id="NF003114">
    <property type="entry name" value="PRK04032.1"/>
    <property type="match status" value="1"/>
</dbReference>
<dbReference type="PANTHER" id="PTHR39650">
    <property type="entry name" value="CDP-ARCHAEOL SYNTHASE"/>
    <property type="match status" value="1"/>
</dbReference>
<dbReference type="PANTHER" id="PTHR39650:SF1">
    <property type="entry name" value="CDP-ARCHAEOL SYNTHASE"/>
    <property type="match status" value="1"/>
</dbReference>
<dbReference type="Pfam" id="PF01864">
    <property type="entry name" value="CarS-like"/>
    <property type="match status" value="1"/>
</dbReference>
<accession>Q8ZYR4</accession>
<reference key="1">
    <citation type="journal article" date="2002" name="Proc. Natl. Acad. Sci. U.S.A.">
        <title>Genome sequence of the hyperthermophilic crenarchaeon Pyrobaculum aerophilum.</title>
        <authorList>
            <person name="Fitz-Gibbon S.T."/>
            <person name="Ladner H."/>
            <person name="Kim U.-J."/>
            <person name="Stetter K.O."/>
            <person name="Simon M.I."/>
            <person name="Miller J.H."/>
        </authorList>
    </citation>
    <scope>NUCLEOTIDE SEQUENCE [LARGE SCALE GENOMIC DNA]</scope>
    <source>
        <strain>ATCC 51768 / DSM 7523 / JCM 9630 / CIP 104966 / NBRC 100827 / IM2</strain>
    </source>
</reference>
<evidence type="ECO:0000255" key="1">
    <source>
        <dbReference type="HAMAP-Rule" id="MF_01117"/>
    </source>
</evidence>
<organism>
    <name type="scientific">Pyrobaculum aerophilum (strain ATCC 51768 / DSM 7523 / JCM 9630 / CIP 104966 / NBRC 100827 / IM2)</name>
    <dbReference type="NCBI Taxonomy" id="178306"/>
    <lineage>
        <taxon>Archaea</taxon>
        <taxon>Thermoproteota</taxon>
        <taxon>Thermoprotei</taxon>
        <taxon>Thermoproteales</taxon>
        <taxon>Thermoproteaceae</taxon>
        <taxon>Pyrobaculum</taxon>
    </lineage>
</organism>
<proteinExistence type="inferred from homology"/>
<comment type="function">
    <text evidence="1">Catalyzes the formation of CDP-2,3-bis-(O-geranylgeranyl)-sn-glycerol (CDP-archaeol) from 2,3-bis-(O-geranylgeranyl)-sn-glycerol 1-phosphate (DGGGP) and CTP. This reaction is the third ether-bond-formation step in the biosynthesis of archaeal membrane lipids.</text>
</comment>
<comment type="catalytic activity">
    <reaction evidence="1">
        <text>2,3-bis-O-(geranylgeranyl)-sn-glycerol 1-phosphate + CTP + H(+) = CDP-2,3-bis-O-(geranylgeranyl)-sn-glycerol + diphosphate</text>
        <dbReference type="Rhea" id="RHEA:25690"/>
        <dbReference type="ChEBI" id="CHEBI:15378"/>
        <dbReference type="ChEBI" id="CHEBI:33019"/>
        <dbReference type="ChEBI" id="CHEBI:37563"/>
        <dbReference type="ChEBI" id="CHEBI:58837"/>
        <dbReference type="ChEBI" id="CHEBI:58838"/>
        <dbReference type="EC" id="2.7.7.67"/>
    </reaction>
</comment>
<comment type="cofactor">
    <cofactor evidence="1">
        <name>Mg(2+)</name>
        <dbReference type="ChEBI" id="CHEBI:18420"/>
    </cofactor>
</comment>
<comment type="pathway">
    <text evidence="1">Membrane lipid metabolism; glycerophospholipid metabolism.</text>
</comment>
<comment type="subcellular location">
    <subcellularLocation>
        <location evidence="1">Cell membrane</location>
        <topology evidence="1">Multi-pass membrane protein</topology>
    </subcellularLocation>
</comment>
<comment type="similarity">
    <text evidence="1">Belongs to the CDP-archaeol synthase family.</text>
</comment>
<keyword id="KW-1003">Cell membrane</keyword>
<keyword id="KW-0444">Lipid biosynthesis</keyword>
<keyword id="KW-0443">Lipid metabolism</keyword>
<keyword id="KW-0460">Magnesium</keyword>
<keyword id="KW-0472">Membrane</keyword>
<keyword id="KW-0594">Phospholipid biosynthesis</keyword>
<keyword id="KW-1208">Phospholipid metabolism</keyword>
<keyword id="KW-1185">Reference proteome</keyword>
<keyword id="KW-0808">Transferase</keyword>
<keyword id="KW-0812">Transmembrane</keyword>
<keyword id="KW-1133">Transmembrane helix</keyword>
<protein>
    <recommendedName>
        <fullName evidence="1">CDP-archaeol synthase</fullName>
        <ecNumber evidence="1">2.7.7.67</ecNumber>
    </recommendedName>
    <alternativeName>
        <fullName evidence="1">CDP-2,3-bis-(O-geranylgeranyl)-sn-glycerol synthase</fullName>
    </alternativeName>
</protein>
<sequence>MDLTVFFLLIWPPYVANGSAVFASRLKWRHPVDFGRNFIDGRRIFGDGKTYEGVAIGIATGTVLGYFPNLVYHVIGVFDAFVLSASAVLGDLIGAFIKRRLCMPRGHPAFPLDQLDFLLTAFLVYSLFREIPVVYVLAAVVITPVIHRATNYVAYLLKLKKEPW</sequence>
<gene>
    <name evidence="1" type="primary">carS</name>
    <name type="ordered locus">PAE0660</name>
</gene>
<name>CDPAS_PYRAE</name>
<feature type="chain" id="PRO_0000094175" description="CDP-archaeol synthase">
    <location>
        <begin position="1"/>
        <end position="164"/>
    </location>
</feature>
<feature type="transmembrane region" description="Helical" evidence="1">
    <location>
        <begin position="3"/>
        <end position="23"/>
    </location>
</feature>
<feature type="transmembrane region" description="Helical" evidence="1">
    <location>
        <begin position="55"/>
        <end position="75"/>
    </location>
</feature>
<feature type="transmembrane region" description="Helical" evidence="1">
    <location>
        <begin position="77"/>
        <end position="97"/>
    </location>
</feature>
<feature type="transmembrane region" description="Helical" evidence="1">
    <location>
        <begin position="122"/>
        <end position="142"/>
    </location>
</feature>